<dbReference type="EMBL" id="AF260299">
    <property type="protein sequence ID" value="AAF99288.1"/>
    <property type="molecule type" value="mRNA"/>
</dbReference>
<dbReference type="EMBL" id="AF260300">
    <property type="protein sequence ID" value="AAF99289.1"/>
    <property type="molecule type" value="mRNA"/>
</dbReference>
<dbReference type="EMBL" id="AF260301">
    <property type="protein sequence ID" value="AAF99290.1"/>
    <property type="molecule type" value="mRNA"/>
</dbReference>
<dbReference type="EMBL" id="HE601487">
    <property type="protein sequence ID" value="CCG58537.1"/>
    <property type="status" value="ALT_SEQ"/>
    <property type="molecule type" value="Genomic_DNA"/>
</dbReference>
<dbReference type="SMR" id="Q9GZ14"/>
<dbReference type="STRING" id="6238.H8WHB6"/>
<dbReference type="EnsemblMetazoa" id="CBG24736.1">
    <property type="protein sequence ID" value="CBG24736.1"/>
    <property type="gene ID" value="WBGene00042778"/>
</dbReference>
<dbReference type="WormBase" id="CBG24736">
    <property type="protein sequence ID" value="CBP37858"/>
    <property type="gene ID" value="WBGene00042778"/>
    <property type="gene designation" value="Cbr-pes-1"/>
</dbReference>
<dbReference type="eggNOG" id="KOG2294">
    <property type="taxonomic scope" value="Eukaryota"/>
</dbReference>
<dbReference type="HOGENOM" id="CLU_099179_0_0_1"/>
<dbReference type="Proteomes" id="UP000008549">
    <property type="component" value="Unassembled WGS sequence"/>
</dbReference>
<dbReference type="GO" id="GO:0005737">
    <property type="term" value="C:cytoplasm"/>
    <property type="evidence" value="ECO:0007669"/>
    <property type="project" value="UniProtKB-SubCell"/>
</dbReference>
<dbReference type="GO" id="GO:0005634">
    <property type="term" value="C:nucleus"/>
    <property type="evidence" value="ECO:0007669"/>
    <property type="project" value="UniProtKB-SubCell"/>
</dbReference>
<dbReference type="GO" id="GO:0000981">
    <property type="term" value="F:DNA-binding transcription factor activity, RNA polymerase II-specific"/>
    <property type="evidence" value="ECO:0000318"/>
    <property type="project" value="GO_Central"/>
</dbReference>
<dbReference type="GO" id="GO:0000978">
    <property type="term" value="F:RNA polymerase II cis-regulatory region sequence-specific DNA binding"/>
    <property type="evidence" value="ECO:0000318"/>
    <property type="project" value="GO_Central"/>
</dbReference>
<dbReference type="GO" id="GO:0009653">
    <property type="term" value="P:anatomical structure morphogenesis"/>
    <property type="evidence" value="ECO:0000318"/>
    <property type="project" value="GO_Central"/>
</dbReference>
<dbReference type="GO" id="GO:0030154">
    <property type="term" value="P:cell differentiation"/>
    <property type="evidence" value="ECO:0000318"/>
    <property type="project" value="GO_Central"/>
</dbReference>
<dbReference type="GO" id="GO:0006357">
    <property type="term" value="P:regulation of transcription by RNA polymerase II"/>
    <property type="evidence" value="ECO:0000318"/>
    <property type="project" value="GO_Central"/>
</dbReference>
<dbReference type="CDD" id="cd00059">
    <property type="entry name" value="FH_FOX"/>
    <property type="match status" value="1"/>
</dbReference>
<dbReference type="FunFam" id="1.10.10.10:FF:000946">
    <property type="entry name" value="ForKHead transcription factor family"/>
    <property type="match status" value="1"/>
</dbReference>
<dbReference type="Gene3D" id="1.10.10.10">
    <property type="entry name" value="Winged helix-like DNA-binding domain superfamily/Winged helix DNA-binding domain"/>
    <property type="match status" value="1"/>
</dbReference>
<dbReference type="InterPro" id="IPR001766">
    <property type="entry name" value="Fork_head_dom"/>
</dbReference>
<dbReference type="InterPro" id="IPR050211">
    <property type="entry name" value="FOX_domain-containing"/>
</dbReference>
<dbReference type="InterPro" id="IPR030456">
    <property type="entry name" value="TF_fork_head_CS_2"/>
</dbReference>
<dbReference type="InterPro" id="IPR036388">
    <property type="entry name" value="WH-like_DNA-bd_sf"/>
</dbReference>
<dbReference type="InterPro" id="IPR036390">
    <property type="entry name" value="WH_DNA-bd_sf"/>
</dbReference>
<dbReference type="PANTHER" id="PTHR11829">
    <property type="entry name" value="FORKHEAD BOX PROTEIN"/>
    <property type="match status" value="1"/>
</dbReference>
<dbReference type="PANTHER" id="PTHR11829:SF398">
    <property type="entry name" value="FORKHEAD BOX PROTEIN PES-1"/>
    <property type="match status" value="1"/>
</dbReference>
<dbReference type="Pfam" id="PF00250">
    <property type="entry name" value="Forkhead"/>
    <property type="match status" value="1"/>
</dbReference>
<dbReference type="PRINTS" id="PR00053">
    <property type="entry name" value="FORKHEAD"/>
</dbReference>
<dbReference type="SMART" id="SM00339">
    <property type="entry name" value="FH"/>
    <property type="match status" value="1"/>
</dbReference>
<dbReference type="SUPFAM" id="SSF46785">
    <property type="entry name" value="Winged helix' DNA-binding domain"/>
    <property type="match status" value="1"/>
</dbReference>
<dbReference type="PROSITE" id="PS00658">
    <property type="entry name" value="FORK_HEAD_2"/>
    <property type="match status" value="1"/>
</dbReference>
<dbReference type="PROSITE" id="PS50039">
    <property type="entry name" value="FORK_HEAD_3"/>
    <property type="match status" value="1"/>
</dbReference>
<protein>
    <recommendedName>
        <fullName evidence="1">Forkhead box protein pes-1</fullName>
    </recommendedName>
    <alternativeName>
        <fullName evidence="1">Pattern expression site 1</fullName>
    </alternativeName>
</protein>
<name>PES1_CAEBR</name>
<feature type="chain" id="PRO_0000455412" description="Forkhead box protein pes-1">
    <location>
        <begin position="1"/>
        <end position="310"/>
    </location>
</feature>
<feature type="DNA-binding region" description="Fork-head" evidence="3">
    <location>
        <begin position="128"/>
        <end position="220"/>
    </location>
</feature>
<feature type="region of interest" description="Disordered" evidence="4">
    <location>
        <begin position="1"/>
        <end position="37"/>
    </location>
</feature>
<feature type="region of interest" description="Disordered" evidence="4">
    <location>
        <begin position="58"/>
        <end position="77"/>
    </location>
</feature>
<feature type="region of interest" description="Disordered" evidence="4">
    <location>
        <begin position="92"/>
        <end position="126"/>
    </location>
</feature>
<feature type="region of interest" description="Disordered" evidence="4">
    <location>
        <begin position="217"/>
        <end position="242"/>
    </location>
</feature>
<feature type="compositionally biased region" description="Polar residues" evidence="4">
    <location>
        <begin position="1"/>
        <end position="16"/>
    </location>
</feature>
<feature type="compositionally biased region" description="Low complexity" evidence="4">
    <location>
        <begin position="17"/>
        <end position="35"/>
    </location>
</feature>
<feature type="compositionally biased region" description="Basic residues" evidence="4">
    <location>
        <begin position="218"/>
        <end position="231"/>
    </location>
</feature>
<feature type="splice variant" id="VSP_061493" description="In isoform 2." evidence="6">
    <location>
        <begin position="1"/>
        <end position="37"/>
    </location>
</feature>
<sequence>MLPLSISTSPDPASQFPTVPDLPTLTPTPSPTSGTAKMNEFTISNLCPEASDRLSLEVSPSSTGLLEPKSSTVSPAPSCTGYPIFDLTGISKQSSSGVSSTRTSSLEPKSSAVSPAPSSPEASNPNKRPAYSYNALIAMAIQNSPFKALRLSEIYAYISNNFPYYKMENGGWQNSIRHNLSLREEFYKVQTTDGKGSFWAMNTQLGSDVYIGKDCGSLRRKKNGKPRKYSKRSNTVSNPNPIPQIPSFTPSPLLATPFPLFLYISQAYAQNPNLLPMMLQNFQHFNFQNIPALSFPFPFSNSNGNPNSRN</sequence>
<reference evidence="7 8 9" key="1">
    <citation type="journal article" date="2000" name="Development">
        <title>Evolutionary conservation of redundancy between a diverged pair of forkhead transcription factor homologues.</title>
        <authorList>
            <person name="Molin L."/>
            <person name="Mounsey A."/>
            <person name="Aslam S."/>
            <person name="Bauer P."/>
            <person name="Young J."/>
            <person name="James M."/>
            <person name="Sharma-Oates A."/>
            <person name="Hope I.A."/>
        </authorList>
    </citation>
    <scope>NUCLEOTIDE SEQUENCE [MRNA] OF 1-181 AND 204-276 (ISOFORMS 1 AND 2)</scope>
    <scope>FUNCTION</scope>
    <scope>DEVELOPMENTAL STAGE</scope>
    <scope>DISRUPTION PHENOTYPE</scope>
</reference>
<reference evidence="10" key="2">
    <citation type="journal article" date="2003" name="PLoS Biol.">
        <title>The genome sequence of Caenorhabditis briggsae: a platform for comparative genomics.</title>
        <authorList>
            <person name="Stein L.D."/>
            <person name="Bao Z."/>
            <person name="Blasiar D."/>
            <person name="Blumenthal T."/>
            <person name="Brent M.R."/>
            <person name="Chen N."/>
            <person name="Chinwalla A."/>
            <person name="Clarke L."/>
            <person name="Clee C."/>
            <person name="Coghlan A."/>
            <person name="Coulson A."/>
            <person name="D'Eustachio P."/>
            <person name="Fitch D.H.A."/>
            <person name="Fulton L.A."/>
            <person name="Fulton R.E."/>
            <person name="Griffiths-Jones S."/>
            <person name="Harris T.W."/>
            <person name="Hillier L.W."/>
            <person name="Kamath R."/>
            <person name="Kuwabara P.E."/>
            <person name="Mardis E.R."/>
            <person name="Marra M.A."/>
            <person name="Miner T.L."/>
            <person name="Minx P."/>
            <person name="Mullikin J.C."/>
            <person name="Plumb R.W."/>
            <person name="Rogers J."/>
            <person name="Schein J.E."/>
            <person name="Sohrmann M."/>
            <person name="Spieth J."/>
            <person name="Stajich J.E."/>
            <person name="Wei C."/>
            <person name="Willey D."/>
            <person name="Wilson R.K."/>
            <person name="Durbin R.M."/>
            <person name="Waterston R.H."/>
        </authorList>
    </citation>
    <scope>NUCLEOTIDE SEQUENCE [LARGE SCALE GENOMIC DNA]</scope>
    <source>
        <strain evidence="10">AF16</strain>
    </source>
</reference>
<evidence type="ECO:0000250" key="1">
    <source>
        <dbReference type="UniProtKB" id="G5EGC9"/>
    </source>
</evidence>
<evidence type="ECO:0000250" key="2">
    <source>
        <dbReference type="UniProtKB" id="Q12952"/>
    </source>
</evidence>
<evidence type="ECO:0000255" key="3">
    <source>
        <dbReference type="PROSITE-ProRule" id="PRU00089"/>
    </source>
</evidence>
<evidence type="ECO:0000256" key="4">
    <source>
        <dbReference type="SAM" id="MobiDB-lite"/>
    </source>
</evidence>
<evidence type="ECO:0000269" key="5">
    <source>
    </source>
</evidence>
<evidence type="ECO:0000305" key="6"/>
<evidence type="ECO:0000312" key="7">
    <source>
        <dbReference type="EMBL" id="AAF99288.1"/>
    </source>
</evidence>
<evidence type="ECO:0000312" key="8">
    <source>
        <dbReference type="EMBL" id="AAF99289.1"/>
    </source>
</evidence>
<evidence type="ECO:0000312" key="9">
    <source>
        <dbReference type="EMBL" id="AAF99290.1"/>
    </source>
</evidence>
<evidence type="ECO:0000312" key="10">
    <source>
        <dbReference type="Proteomes" id="UP000008549"/>
    </source>
</evidence>
<evidence type="ECO:0000312" key="11">
    <source>
        <dbReference type="WormBase" id="CBG24736"/>
    </source>
</evidence>
<keyword id="KW-0025">Alternative splicing</keyword>
<keyword id="KW-0963">Cytoplasm</keyword>
<keyword id="KW-0238">DNA-binding</keyword>
<keyword id="KW-0539">Nucleus</keyword>
<keyword id="KW-1185">Reference proteome</keyword>
<keyword id="KW-0804">Transcription</keyword>
<keyword id="KW-0805">Transcription regulation</keyword>
<accession>Q9GZ14</accession>
<accession>H8WHB6</accession>
<accession>Q9GZ12</accession>
<accession>Q9GZ13</accession>
<proteinExistence type="evidence at transcript level"/>
<gene>
    <name evidence="11" type="primary">pes-1</name>
    <name evidence="11" type="ORF">CBG24736</name>
</gene>
<organism evidence="10">
    <name type="scientific">Caenorhabditis briggsae</name>
    <dbReference type="NCBI Taxonomy" id="6238"/>
    <lineage>
        <taxon>Eukaryota</taxon>
        <taxon>Metazoa</taxon>
        <taxon>Ecdysozoa</taxon>
        <taxon>Nematoda</taxon>
        <taxon>Chromadorea</taxon>
        <taxon>Rhabditida</taxon>
        <taxon>Rhabditina</taxon>
        <taxon>Rhabditomorpha</taxon>
        <taxon>Rhabditoidea</taxon>
        <taxon>Rhabditidae</taxon>
        <taxon>Peloderinae</taxon>
        <taxon>Caenorhabditis</taxon>
    </lineage>
</organism>
<comment type="function">
    <text evidence="2 5">Transcription factor (By similarity). Plays a role in embryogenesis and later development, perhaps acting redundantly with forkhead protein fkh-2 (PubMed:11044397).</text>
</comment>
<comment type="subcellular location">
    <subcellularLocation>
        <location evidence="3">Nucleus</location>
    </subcellularLocation>
    <subcellularLocation>
        <location evidence="1">Cytoplasm</location>
    </subcellularLocation>
</comment>
<comment type="alternative products">
    <event type="alternative splicing"/>
    <isoform>
        <id>Q9GZ14-1</id>
        <name>1</name>
        <sequence type="displayed"/>
    </isoform>
    <isoform>
        <id>Q9GZ14-2</id>
        <name>2</name>
        <sequence type="described" ref="VSP_061493"/>
    </isoform>
</comment>
<comment type="developmental stage">
    <text evidence="5">Expressed in the AB lineage at the 185 cell stage (PubMed:11044397). Also expressed in the lineage of the D founder cell in the 185 cell embryo, continuing to at least the comma stage (PubMed:11044397). Expressed in Z1 and Z4 cells at the comma stage (PubMed:11044397).</text>
</comment>
<comment type="disruption phenotype">
    <text evidence="5">RNAi-mediated knockdown in adults has little or no phenotypic effect on adult or their progeny (PubMed:11044397). However, simultaneous knockdown of forkhead gene fkh-2 in adults causes 8% embryonic lethality, and nearly 80% arrest after hatching as L1 stage larvae (PubMed:11044397).</text>
</comment>
<comment type="sequence caution" evidence="6">
    <conflict type="erroneous gene model prediction">
        <sequence resource="EMBL-CDS" id="CCG58537"/>
    </conflict>
</comment>